<proteinExistence type="inferred from homology"/>
<feature type="chain" id="PRO_0000382583" description="Ribosomal RNA small subunit methyltransferase F">
    <location>
        <begin position="1"/>
        <end position="486"/>
    </location>
</feature>
<feature type="active site" description="Nucleophile" evidence="1">
    <location>
        <position position="246"/>
    </location>
</feature>
<feature type="binding site" evidence="1">
    <location>
        <begin position="124"/>
        <end position="130"/>
    </location>
    <ligand>
        <name>S-adenosyl-L-methionine</name>
        <dbReference type="ChEBI" id="CHEBI:59789"/>
    </ligand>
</feature>
<feature type="binding site" evidence="1">
    <location>
        <position position="148"/>
    </location>
    <ligand>
        <name>S-adenosyl-L-methionine</name>
        <dbReference type="ChEBI" id="CHEBI:59789"/>
    </ligand>
</feature>
<feature type="binding site" evidence="1">
    <location>
        <position position="175"/>
    </location>
    <ligand>
        <name>S-adenosyl-L-methionine</name>
        <dbReference type="ChEBI" id="CHEBI:59789"/>
    </ligand>
</feature>
<feature type="binding site" evidence="1">
    <location>
        <position position="193"/>
    </location>
    <ligand>
        <name>S-adenosyl-L-methionine</name>
        <dbReference type="ChEBI" id="CHEBI:59789"/>
    </ligand>
</feature>
<comment type="function">
    <text evidence="1">Specifically methylates the cytosine at position 1407 (m5C1407) of 16S rRNA.</text>
</comment>
<comment type="catalytic activity">
    <reaction evidence="1">
        <text>cytidine(1407) in 16S rRNA + S-adenosyl-L-methionine = 5-methylcytidine(1407) in 16S rRNA + S-adenosyl-L-homocysteine + H(+)</text>
        <dbReference type="Rhea" id="RHEA:42756"/>
        <dbReference type="Rhea" id="RHEA-COMP:10223"/>
        <dbReference type="Rhea" id="RHEA-COMP:10224"/>
        <dbReference type="ChEBI" id="CHEBI:15378"/>
        <dbReference type="ChEBI" id="CHEBI:57856"/>
        <dbReference type="ChEBI" id="CHEBI:59789"/>
        <dbReference type="ChEBI" id="CHEBI:74483"/>
        <dbReference type="ChEBI" id="CHEBI:82748"/>
        <dbReference type="EC" id="2.1.1.178"/>
    </reaction>
</comment>
<comment type="subcellular location">
    <subcellularLocation>
        <location evidence="1">Cytoplasm</location>
    </subcellularLocation>
</comment>
<comment type="similarity">
    <text evidence="1">Belongs to the class I-like SAM-binding methyltransferase superfamily. RsmB/NOP family.</text>
</comment>
<comment type="sequence caution" evidence="2">
    <conflict type="erroneous initiation">
        <sequence resource="EMBL-CDS" id="ACK46401"/>
    </conflict>
</comment>
<accession>B8E968</accession>
<protein>
    <recommendedName>
        <fullName evidence="1">Ribosomal RNA small subunit methyltransferase F</fullName>
        <ecNumber evidence="1">2.1.1.178</ecNumber>
    </recommendedName>
    <alternativeName>
        <fullName evidence="1">16S rRNA m5C1407 methyltransferase</fullName>
    </alternativeName>
    <alternativeName>
        <fullName evidence="1">rRNA (cytosine-C(5)-)-methyltransferase RsmF</fullName>
    </alternativeName>
</protein>
<evidence type="ECO:0000255" key="1">
    <source>
        <dbReference type="HAMAP-Rule" id="MF_01579"/>
    </source>
</evidence>
<evidence type="ECO:0000305" key="2"/>
<dbReference type="EC" id="2.1.1.178" evidence="1"/>
<dbReference type="EMBL" id="CP001252">
    <property type="protein sequence ID" value="ACK46401.1"/>
    <property type="status" value="ALT_INIT"/>
    <property type="molecule type" value="Genomic_DNA"/>
</dbReference>
<dbReference type="RefSeq" id="WP_086014849.1">
    <property type="nucleotide sequence ID" value="NC_011663.1"/>
</dbReference>
<dbReference type="SMR" id="B8E968"/>
<dbReference type="KEGG" id="sbp:Sbal223_1896"/>
<dbReference type="HOGENOM" id="CLU_005316_6_2_6"/>
<dbReference type="Proteomes" id="UP000002507">
    <property type="component" value="Chromosome"/>
</dbReference>
<dbReference type="GO" id="GO:0005737">
    <property type="term" value="C:cytoplasm"/>
    <property type="evidence" value="ECO:0007669"/>
    <property type="project" value="UniProtKB-SubCell"/>
</dbReference>
<dbReference type="GO" id="GO:0003723">
    <property type="term" value="F:RNA binding"/>
    <property type="evidence" value="ECO:0007669"/>
    <property type="project" value="UniProtKB-KW"/>
</dbReference>
<dbReference type="GO" id="GO:0009383">
    <property type="term" value="F:rRNA (cytosine-C5-)-methyltransferase activity"/>
    <property type="evidence" value="ECO:0007669"/>
    <property type="project" value="TreeGrafter"/>
</dbReference>
<dbReference type="GO" id="GO:0070475">
    <property type="term" value="P:rRNA base methylation"/>
    <property type="evidence" value="ECO:0007669"/>
    <property type="project" value="TreeGrafter"/>
</dbReference>
<dbReference type="CDD" id="cd02440">
    <property type="entry name" value="AdoMet_MTases"/>
    <property type="match status" value="1"/>
</dbReference>
<dbReference type="Gene3D" id="3.10.450.720">
    <property type="match status" value="1"/>
</dbReference>
<dbReference type="Gene3D" id="3.40.50.150">
    <property type="entry name" value="Vaccinia Virus protein VP39"/>
    <property type="match status" value="1"/>
</dbReference>
<dbReference type="HAMAP" id="MF_01579">
    <property type="entry name" value="16SrRNA_methyltr_F"/>
    <property type="match status" value="1"/>
</dbReference>
<dbReference type="InterPro" id="IPR031341">
    <property type="entry name" value="Methyltr_RsmF_N"/>
</dbReference>
<dbReference type="InterPro" id="IPR049560">
    <property type="entry name" value="MeTrfase_RsmB-F_NOP2_cat"/>
</dbReference>
<dbReference type="InterPro" id="IPR001678">
    <property type="entry name" value="MeTrfase_RsmB-F_NOP2_dom"/>
</dbReference>
<dbReference type="InterPro" id="IPR027391">
    <property type="entry name" value="Nol1_Nop2_Fmu_2"/>
</dbReference>
<dbReference type="InterPro" id="IPR011023">
    <property type="entry name" value="Nop2p"/>
</dbReference>
<dbReference type="InterPro" id="IPR023267">
    <property type="entry name" value="RCMT"/>
</dbReference>
<dbReference type="InterPro" id="IPR023545">
    <property type="entry name" value="rRNA_ssu_MeTfrase_F"/>
</dbReference>
<dbReference type="InterPro" id="IPR029063">
    <property type="entry name" value="SAM-dependent_MTases_sf"/>
</dbReference>
<dbReference type="InterPro" id="IPR048457">
    <property type="entry name" value="YebU_pre-PUA_dom"/>
</dbReference>
<dbReference type="NCBIfam" id="TIGR00446">
    <property type="entry name" value="nop2p"/>
    <property type="match status" value="1"/>
</dbReference>
<dbReference type="NCBIfam" id="NF008898">
    <property type="entry name" value="PRK11933.1"/>
    <property type="match status" value="1"/>
</dbReference>
<dbReference type="PANTHER" id="PTHR22807:SF30">
    <property type="entry name" value="28S RRNA (CYTOSINE(4447)-C(5))-METHYLTRANSFERASE-RELATED"/>
    <property type="match status" value="1"/>
</dbReference>
<dbReference type="PANTHER" id="PTHR22807">
    <property type="entry name" value="NOP2 YEAST -RELATED NOL1/NOP2/FMU SUN DOMAIN-CONTAINING"/>
    <property type="match status" value="1"/>
</dbReference>
<dbReference type="Pfam" id="PF01189">
    <property type="entry name" value="Methyltr_RsmB-F"/>
    <property type="match status" value="1"/>
</dbReference>
<dbReference type="Pfam" id="PF17125">
    <property type="entry name" value="Methyltr_RsmF_N"/>
    <property type="match status" value="1"/>
</dbReference>
<dbReference type="Pfam" id="PF13636">
    <property type="entry name" value="Methyltranf_PUA"/>
    <property type="match status" value="1"/>
</dbReference>
<dbReference type="Pfam" id="PF21150">
    <property type="entry name" value="YebU_pre-PUA_dom"/>
    <property type="match status" value="1"/>
</dbReference>
<dbReference type="PRINTS" id="PR02008">
    <property type="entry name" value="RCMTFAMILY"/>
</dbReference>
<dbReference type="SUPFAM" id="SSF53335">
    <property type="entry name" value="S-adenosyl-L-methionine-dependent methyltransferases"/>
    <property type="match status" value="1"/>
</dbReference>
<dbReference type="PROSITE" id="PS51686">
    <property type="entry name" value="SAM_MT_RSMB_NOP"/>
    <property type="match status" value="1"/>
</dbReference>
<organism>
    <name type="scientific">Shewanella baltica (strain OS223)</name>
    <dbReference type="NCBI Taxonomy" id="407976"/>
    <lineage>
        <taxon>Bacteria</taxon>
        <taxon>Pseudomonadati</taxon>
        <taxon>Pseudomonadota</taxon>
        <taxon>Gammaproteobacteria</taxon>
        <taxon>Alteromonadales</taxon>
        <taxon>Shewanellaceae</taxon>
        <taxon>Shewanella</taxon>
    </lineage>
</organism>
<sequence>MVQLNQNFIDTITQELPAHLSMDEFIAACDRPLRRSIRVNTLKISSDDFKTLMQPKGWTFDPIPWCEDGFWISYDEEEQLGNALEHIQGLFYIQEASSMLPPTALFTPSAFTTSAKWQCVLDLASAPGSKTTQMAALMQNQGLLVANEYSASRVKVLHANVLRMGASHCALTHFDGRVFGEYLYESFDAVLIDAPCGGEGTVRKDVDALKHWSLDDVLAISETQKALIESAFLALKPGGSLVYSTCTLNRLENQGVCEYLKQVYGDAVQFESLSDLFDGAERATTAEGFLHVWPQIYDSEGFFVAKLTKTASVPRLQPEPKLQKNFPFTPASAKQAQGIKDYFQQDLGISLPDELIMVRDDEFWLFPHEFNAFIGRMRFQRIGIKLADSSKHGFKVRHEAIIALAGKQLSPTAKTVDVSDVEAKEYLMGRDIPLATADKAQGEVIVCYGGAPLGMAKHLGNKLKNNLPRDLVKDKVLLLPEQTKSL</sequence>
<reference key="1">
    <citation type="submission" date="2008-12" db="EMBL/GenBank/DDBJ databases">
        <title>Complete sequence of chromosome of Shewanella baltica OS223.</title>
        <authorList>
            <consortium name="US DOE Joint Genome Institute"/>
            <person name="Lucas S."/>
            <person name="Copeland A."/>
            <person name="Lapidus A."/>
            <person name="Glavina del Rio T."/>
            <person name="Dalin E."/>
            <person name="Tice H."/>
            <person name="Bruce D."/>
            <person name="Goodwin L."/>
            <person name="Pitluck S."/>
            <person name="Chertkov O."/>
            <person name="Meincke L."/>
            <person name="Brettin T."/>
            <person name="Detter J.C."/>
            <person name="Han C."/>
            <person name="Kuske C.R."/>
            <person name="Larimer F."/>
            <person name="Land M."/>
            <person name="Hauser L."/>
            <person name="Kyrpides N."/>
            <person name="Ovchinnikova G."/>
            <person name="Brettar I."/>
            <person name="Rodrigues J."/>
            <person name="Konstantinidis K."/>
            <person name="Tiedje J."/>
        </authorList>
    </citation>
    <scope>NUCLEOTIDE SEQUENCE [LARGE SCALE GENOMIC DNA]</scope>
    <source>
        <strain>OS223</strain>
    </source>
</reference>
<name>RSMF_SHEB2</name>
<keyword id="KW-0963">Cytoplasm</keyword>
<keyword id="KW-0489">Methyltransferase</keyword>
<keyword id="KW-0694">RNA-binding</keyword>
<keyword id="KW-0698">rRNA processing</keyword>
<keyword id="KW-0949">S-adenosyl-L-methionine</keyword>
<keyword id="KW-0808">Transferase</keyword>
<gene>
    <name evidence="1" type="primary">rsmF</name>
    <name type="ordered locus">Sbal223_1896</name>
</gene>